<reference key="1">
    <citation type="submission" date="2005-07" db="EMBL/GenBank/DDBJ databases">
        <title>Complete sequence of Synechococcus sp. CC9605.</title>
        <authorList>
            <consortium name="US DOE Joint Genome Institute"/>
            <person name="Copeland A."/>
            <person name="Lucas S."/>
            <person name="Lapidus A."/>
            <person name="Barry K."/>
            <person name="Detter J.C."/>
            <person name="Glavina T."/>
            <person name="Hammon N."/>
            <person name="Israni S."/>
            <person name="Pitluck S."/>
            <person name="Schmutz J."/>
            <person name="Martinez M."/>
            <person name="Larimer F."/>
            <person name="Land M."/>
            <person name="Kyrpides N."/>
            <person name="Ivanova N."/>
            <person name="Richardson P."/>
        </authorList>
    </citation>
    <scope>NUCLEOTIDE SEQUENCE [LARGE SCALE GENOMIC DNA]</scope>
    <source>
        <strain>CC9605</strain>
    </source>
</reference>
<gene>
    <name evidence="1 2" type="primary">psbA3</name>
    <name type="ordered locus">Syncc9605_1042</name>
</gene>
<accession>Q3AKT2</accession>
<feature type="chain" id="PRO_0000316394" description="Photosystem II protein D1 2" evidence="1">
    <location>
        <begin position="1"/>
        <end position="343"/>
    </location>
</feature>
<feature type="propeptide" id="PRO_0000316395" evidence="1">
    <location>
        <begin position="344"/>
        <end position="358"/>
    </location>
</feature>
<feature type="transmembrane region" description="Helical" evidence="1">
    <location>
        <begin position="28"/>
        <end position="45"/>
    </location>
</feature>
<feature type="transmembrane region" description="Helical" evidence="1">
    <location>
        <begin position="117"/>
        <end position="132"/>
    </location>
</feature>
<feature type="transmembrane region" description="Helical" evidence="1">
    <location>
        <begin position="141"/>
        <end position="155"/>
    </location>
</feature>
<feature type="transmembrane region" description="Helical" evidence="1">
    <location>
        <begin position="196"/>
        <end position="217"/>
    </location>
</feature>
<feature type="transmembrane region" description="Helical" evidence="1">
    <location>
        <begin position="273"/>
        <end position="287"/>
    </location>
</feature>
<feature type="binding site" description="axial binding residue" evidence="1">
    <location>
        <position position="117"/>
    </location>
    <ligand>
        <name>chlorophyll a</name>
        <dbReference type="ChEBI" id="CHEBI:58416"/>
        <label>ChlzD1</label>
    </ligand>
    <ligandPart>
        <name>Mg</name>
        <dbReference type="ChEBI" id="CHEBI:25107"/>
    </ligandPart>
</feature>
<feature type="binding site" evidence="1">
    <location>
        <position position="125"/>
    </location>
    <ligand>
        <name>pheophytin a</name>
        <dbReference type="ChEBI" id="CHEBI:136840"/>
        <label>D1</label>
    </ligand>
</feature>
<feature type="binding site" evidence="1">
    <location>
        <position position="169"/>
    </location>
    <ligand>
        <name>[CaMn4O5] cluster</name>
        <dbReference type="ChEBI" id="CHEBI:189552"/>
    </ligand>
</feature>
<feature type="binding site" evidence="1">
    <location>
        <position position="188"/>
    </location>
    <ligand>
        <name>[CaMn4O5] cluster</name>
        <dbReference type="ChEBI" id="CHEBI:189552"/>
    </ligand>
</feature>
<feature type="binding site" description="axial binding residue" evidence="1">
    <location>
        <position position="197"/>
    </location>
    <ligand>
        <name>chlorophyll a</name>
        <dbReference type="ChEBI" id="CHEBI:58416"/>
        <label>PD1</label>
    </ligand>
    <ligandPart>
        <name>Mg</name>
        <dbReference type="ChEBI" id="CHEBI:25107"/>
    </ligandPart>
</feature>
<feature type="binding site" evidence="1">
    <location>
        <position position="214"/>
    </location>
    <ligand>
        <name>a quinone</name>
        <dbReference type="ChEBI" id="CHEBI:132124"/>
        <label>B</label>
    </ligand>
</feature>
<feature type="binding site" evidence="1">
    <location>
        <position position="214"/>
    </location>
    <ligand>
        <name>Fe cation</name>
        <dbReference type="ChEBI" id="CHEBI:24875"/>
        <note>ligand shared with heterodimeric partner</note>
    </ligand>
</feature>
<feature type="binding site" evidence="1">
    <location>
        <begin position="263"/>
        <end position="264"/>
    </location>
    <ligand>
        <name>a quinone</name>
        <dbReference type="ChEBI" id="CHEBI:132124"/>
        <label>B</label>
    </ligand>
</feature>
<feature type="binding site" evidence="1">
    <location>
        <position position="271"/>
    </location>
    <ligand>
        <name>Fe cation</name>
        <dbReference type="ChEBI" id="CHEBI:24875"/>
        <note>ligand shared with heterodimeric partner</note>
    </ligand>
</feature>
<feature type="binding site" evidence="1">
    <location>
        <position position="331"/>
    </location>
    <ligand>
        <name>[CaMn4O5] cluster</name>
        <dbReference type="ChEBI" id="CHEBI:189552"/>
    </ligand>
</feature>
<feature type="binding site" evidence="1">
    <location>
        <position position="332"/>
    </location>
    <ligand>
        <name>[CaMn4O5] cluster</name>
        <dbReference type="ChEBI" id="CHEBI:189552"/>
    </ligand>
</feature>
<feature type="binding site" evidence="1">
    <location>
        <position position="341"/>
    </location>
    <ligand>
        <name>[CaMn4O5] cluster</name>
        <dbReference type="ChEBI" id="CHEBI:189552"/>
    </ligand>
</feature>
<feature type="binding site" evidence="1">
    <location>
        <position position="343"/>
    </location>
    <ligand>
        <name>[CaMn4O5] cluster</name>
        <dbReference type="ChEBI" id="CHEBI:189552"/>
    </ligand>
</feature>
<feature type="site" description="Tyrosine radical intermediate" evidence="1">
    <location>
        <position position="160"/>
    </location>
</feature>
<feature type="site" description="Stabilizes free radical intermediate" evidence="1">
    <location>
        <position position="189"/>
    </location>
</feature>
<feature type="site" description="Cleavage; by CtpA" evidence="1">
    <location>
        <begin position="343"/>
        <end position="344"/>
    </location>
</feature>
<dbReference type="EC" id="1.10.3.9" evidence="1"/>
<dbReference type="EMBL" id="CP000110">
    <property type="protein sequence ID" value="ABB34800.1"/>
    <property type="molecule type" value="Genomic_DNA"/>
</dbReference>
<dbReference type="SMR" id="Q3AKT2"/>
<dbReference type="STRING" id="110662.Syncc9605_1042"/>
<dbReference type="KEGG" id="syd:Syncc9605_1042"/>
<dbReference type="eggNOG" id="ENOG502Z87P">
    <property type="taxonomic scope" value="Bacteria"/>
</dbReference>
<dbReference type="HOGENOM" id="CLU_054206_1_0_3"/>
<dbReference type="OrthoDB" id="505356at2"/>
<dbReference type="GO" id="GO:0009523">
    <property type="term" value="C:photosystem II"/>
    <property type="evidence" value="ECO:0007669"/>
    <property type="project" value="UniProtKB-KW"/>
</dbReference>
<dbReference type="GO" id="GO:0031676">
    <property type="term" value="C:plasma membrane-derived thylakoid membrane"/>
    <property type="evidence" value="ECO:0007669"/>
    <property type="project" value="UniProtKB-SubCell"/>
</dbReference>
<dbReference type="GO" id="GO:0016168">
    <property type="term" value="F:chlorophyll binding"/>
    <property type="evidence" value="ECO:0007669"/>
    <property type="project" value="UniProtKB-UniRule"/>
</dbReference>
<dbReference type="GO" id="GO:0045156">
    <property type="term" value="F:electron transporter, transferring electrons within the cyclic electron transport pathway of photosynthesis activity"/>
    <property type="evidence" value="ECO:0007669"/>
    <property type="project" value="InterPro"/>
</dbReference>
<dbReference type="GO" id="GO:0005506">
    <property type="term" value="F:iron ion binding"/>
    <property type="evidence" value="ECO:0007669"/>
    <property type="project" value="UniProtKB-UniRule"/>
</dbReference>
<dbReference type="GO" id="GO:0016682">
    <property type="term" value="F:oxidoreductase activity, acting on diphenols and related substances as donors, oxygen as acceptor"/>
    <property type="evidence" value="ECO:0007669"/>
    <property type="project" value="UniProtKB-UniRule"/>
</dbReference>
<dbReference type="GO" id="GO:0010242">
    <property type="term" value="F:oxygen evolving activity"/>
    <property type="evidence" value="ECO:0007669"/>
    <property type="project" value="UniProtKB-EC"/>
</dbReference>
<dbReference type="GO" id="GO:0009772">
    <property type="term" value="P:photosynthetic electron transport in photosystem II"/>
    <property type="evidence" value="ECO:0007669"/>
    <property type="project" value="InterPro"/>
</dbReference>
<dbReference type="GO" id="GO:0009635">
    <property type="term" value="P:response to herbicide"/>
    <property type="evidence" value="ECO:0007669"/>
    <property type="project" value="UniProtKB-KW"/>
</dbReference>
<dbReference type="CDD" id="cd09289">
    <property type="entry name" value="Photosystem-II_D1"/>
    <property type="match status" value="1"/>
</dbReference>
<dbReference type="FunFam" id="1.20.85.10:FF:000002">
    <property type="entry name" value="Photosystem II protein D1"/>
    <property type="match status" value="1"/>
</dbReference>
<dbReference type="Gene3D" id="1.20.85.10">
    <property type="entry name" value="Photosystem II protein D1-like"/>
    <property type="match status" value="1"/>
</dbReference>
<dbReference type="HAMAP" id="MF_01379">
    <property type="entry name" value="PSII_PsbA_D1"/>
    <property type="match status" value="1"/>
</dbReference>
<dbReference type="InterPro" id="IPR055266">
    <property type="entry name" value="D1/D2"/>
</dbReference>
<dbReference type="InterPro" id="IPR036854">
    <property type="entry name" value="Photo_II_D1/D2_sf"/>
</dbReference>
<dbReference type="InterPro" id="IPR000484">
    <property type="entry name" value="Photo_RC_L/M"/>
</dbReference>
<dbReference type="InterPro" id="IPR055265">
    <property type="entry name" value="Photo_RC_L/M_CS"/>
</dbReference>
<dbReference type="InterPro" id="IPR005867">
    <property type="entry name" value="PSII_D1"/>
</dbReference>
<dbReference type="NCBIfam" id="TIGR01151">
    <property type="entry name" value="psbA"/>
    <property type="match status" value="1"/>
</dbReference>
<dbReference type="PANTHER" id="PTHR33149:SF12">
    <property type="entry name" value="PHOTOSYSTEM II D2 PROTEIN"/>
    <property type="match status" value="1"/>
</dbReference>
<dbReference type="PANTHER" id="PTHR33149">
    <property type="entry name" value="PHOTOSYSTEM II PROTEIN D1"/>
    <property type="match status" value="1"/>
</dbReference>
<dbReference type="Pfam" id="PF00124">
    <property type="entry name" value="Photo_RC"/>
    <property type="match status" value="1"/>
</dbReference>
<dbReference type="PRINTS" id="PR00256">
    <property type="entry name" value="REACTNCENTRE"/>
</dbReference>
<dbReference type="SUPFAM" id="SSF81483">
    <property type="entry name" value="Bacterial photosystem II reaction centre, L and M subunits"/>
    <property type="match status" value="1"/>
</dbReference>
<dbReference type="PROSITE" id="PS00244">
    <property type="entry name" value="REACTION_CENTER"/>
    <property type="match status" value="1"/>
</dbReference>
<protein>
    <recommendedName>
        <fullName evidence="1">Photosystem II protein D1 2</fullName>
        <shortName evidence="1">PSII D1 protein 2</shortName>
        <ecNumber evidence="1">1.10.3.9</ecNumber>
    </recommendedName>
    <alternativeName>
        <fullName evidence="1">Photosystem II Q(B) protein 2</fullName>
    </alternativeName>
</protein>
<name>PSBA2_SYNSC</name>
<organism>
    <name type="scientific">Synechococcus sp. (strain CC9605)</name>
    <dbReference type="NCBI Taxonomy" id="110662"/>
    <lineage>
        <taxon>Bacteria</taxon>
        <taxon>Bacillati</taxon>
        <taxon>Cyanobacteriota</taxon>
        <taxon>Cyanophyceae</taxon>
        <taxon>Synechococcales</taxon>
        <taxon>Synechococcaceae</taxon>
        <taxon>Synechococcus</taxon>
    </lineage>
</organism>
<keyword id="KW-0106">Calcium</keyword>
<keyword id="KW-0148">Chlorophyll</keyword>
<keyword id="KW-0157">Chromophore</keyword>
<keyword id="KW-0249">Electron transport</keyword>
<keyword id="KW-0359">Herbicide resistance</keyword>
<keyword id="KW-0408">Iron</keyword>
<keyword id="KW-0460">Magnesium</keyword>
<keyword id="KW-0464">Manganese</keyword>
<keyword id="KW-0472">Membrane</keyword>
<keyword id="KW-0479">Metal-binding</keyword>
<keyword id="KW-0560">Oxidoreductase</keyword>
<keyword id="KW-0602">Photosynthesis</keyword>
<keyword id="KW-0604">Photosystem II</keyword>
<keyword id="KW-0793">Thylakoid</keyword>
<keyword id="KW-0812">Transmembrane</keyword>
<keyword id="KW-1133">Transmembrane helix</keyword>
<keyword id="KW-0813">Transport</keyword>
<sequence>MSTAIRSGRQSNWEAFCQWVTDTNNRIYVGWFGVLMIPCLLAATICFTIAFIAAPPVDIDGIREPVAGSLIYGNNIISGAVIPSSNAIGLHFYPIWEAASLDEWLYNGGPYQLVCFHFLIGISAYMGRQWELSYRLGMRPWICVAYSAPLSAAMAVFLVYPFGQGSFSDGMPLGISGTFNFMLVFQAEHNILMHPFHMLGVAGVFGGSLFSAMHGSLVTSSLVRETTEAESQNYGYKFGQEEETYNIVAAHGYFGRLIFQYASFNNSRSLHFFLGAWPVVGIWFTSMGISTMAFNLNGFNFNQSILDSQGRVLNTWADVLNRANLGMEVQHERNAHNFPLDLAAAESTPVALQAPAIG</sequence>
<evidence type="ECO:0000255" key="1">
    <source>
        <dbReference type="HAMAP-Rule" id="MF_01379"/>
    </source>
</evidence>
<evidence type="ECO:0000305" key="2"/>
<comment type="function">
    <text evidence="1">Photosystem II (PSII) is a light-driven water:plastoquinone oxidoreductase that uses light energy to abstract electrons from H(2)O, generating O(2) and a proton gradient subsequently used for ATP formation. It consists of a core antenna complex that captures photons, and an electron transfer chain that converts photonic excitation into a charge separation. The D1/D2 (PsbA/PsbD) reaction center heterodimer binds P680, the primary electron donor of PSII as well as several subsequent electron acceptors.</text>
</comment>
<comment type="catalytic activity">
    <reaction evidence="1">
        <text>2 a plastoquinone + 4 hnu + 2 H2O = 2 a plastoquinol + O2</text>
        <dbReference type="Rhea" id="RHEA:36359"/>
        <dbReference type="Rhea" id="RHEA-COMP:9561"/>
        <dbReference type="Rhea" id="RHEA-COMP:9562"/>
        <dbReference type="ChEBI" id="CHEBI:15377"/>
        <dbReference type="ChEBI" id="CHEBI:15379"/>
        <dbReference type="ChEBI" id="CHEBI:17757"/>
        <dbReference type="ChEBI" id="CHEBI:30212"/>
        <dbReference type="ChEBI" id="CHEBI:62192"/>
        <dbReference type="EC" id="1.10.3.9"/>
    </reaction>
</comment>
<comment type="cofactor">
    <text evidence="1">The D1/D2 heterodimer binds P680, chlorophylls that are the primary electron donor of PSII, and subsequent electron acceptors. It shares a non-heme iron and each subunit binds pheophytin, quinone, additional chlorophylls, carotenoids and lipids. D1 provides most of the ligands for the Mn4-Ca-O5 cluster of the oxygen-evolving complex (OEC). There is also a Cl(-1) ion associated with D1 and D2, which is required for oxygen evolution. The PSII complex binds additional chlorophylls, carotenoids and specific lipids.</text>
</comment>
<comment type="subunit">
    <text evidence="1">PSII is composed of 1 copy each of membrane proteins PsbA, PsbB, PsbC, PsbD, PsbE, PsbF, PsbH, PsbI, PsbJ, PsbK, PsbL, PsbM, PsbT, PsbX, PsbY, PsbZ, Psb30/Ycf12, peripheral proteins PsbO, CyanoQ (PsbQ), PsbU, PsbV and a large number of cofactors. It forms dimeric complexes.</text>
</comment>
<comment type="subcellular location">
    <subcellularLocation>
        <location evidence="1">Cellular thylakoid membrane</location>
        <topology evidence="1">Multi-pass membrane protein</topology>
    </subcellularLocation>
</comment>
<comment type="PTM">
    <text evidence="1">Tyr-160 forms a radical intermediate that is referred to as redox-active TyrZ, YZ or Y-Z.</text>
</comment>
<comment type="PTM">
    <text evidence="1">C-terminally processed by CtpA; processing is essential to allow assembly of the oxygen-evolving complex and thus photosynthetic growth.</text>
</comment>
<comment type="miscellaneous">
    <text evidence="1">Cyanobacteria usually contain more than 2 copies of the psbA gene.</text>
</comment>
<comment type="miscellaneous">
    <text evidence="1">2 of the reaction center chlorophylls (ChlD1 and ChlD2) are entirely coordinated by water.</text>
</comment>
<comment type="miscellaneous">
    <text evidence="1">Herbicides such as atrazine, BNT, diuron or ioxynil bind in the Q(B) binding site and block subsequent electron transfer.</text>
</comment>
<comment type="similarity">
    <text evidence="1">Belongs to the reaction center PufL/M/PsbA/D family.</text>
</comment>
<proteinExistence type="inferred from homology"/>